<protein>
    <recommendedName>
        <fullName evidence="10">Fatty acid synthase 2</fullName>
        <ecNumber evidence="12">2.3.1.-</ecNumber>
    </recommendedName>
    <alternativeName>
        <fullName evidence="10">Ustilagic acid biosynthesis cluster protein fas2</fullName>
    </alternativeName>
</protein>
<accession>A0A0D1DNX1</accession>
<proteinExistence type="evidence at transcript level"/>
<reference key="1">
    <citation type="journal article" date="2006" name="Nature">
        <title>Insights from the genome of the biotrophic fungal plant pathogen Ustilago maydis.</title>
        <authorList>
            <person name="Kaemper J."/>
            <person name="Kahmann R."/>
            <person name="Boelker M."/>
            <person name="Ma L.-J."/>
            <person name="Brefort T."/>
            <person name="Saville B.J."/>
            <person name="Banuett F."/>
            <person name="Kronstad J.W."/>
            <person name="Gold S.E."/>
            <person name="Mueller O."/>
            <person name="Perlin M.H."/>
            <person name="Woesten H.A.B."/>
            <person name="de Vries R."/>
            <person name="Ruiz-Herrera J."/>
            <person name="Reynaga-Pena C.G."/>
            <person name="Snetselaar K."/>
            <person name="McCann M."/>
            <person name="Perez-Martin J."/>
            <person name="Feldbruegge M."/>
            <person name="Basse C.W."/>
            <person name="Steinberg G."/>
            <person name="Ibeas J.I."/>
            <person name="Holloman W."/>
            <person name="Guzman P."/>
            <person name="Farman M.L."/>
            <person name="Stajich J.E."/>
            <person name="Sentandreu R."/>
            <person name="Gonzalez-Prieto J.M."/>
            <person name="Kennell J.C."/>
            <person name="Molina L."/>
            <person name="Schirawski J."/>
            <person name="Mendoza-Mendoza A."/>
            <person name="Greilinger D."/>
            <person name="Muench K."/>
            <person name="Roessel N."/>
            <person name="Scherer M."/>
            <person name="Vranes M."/>
            <person name="Ladendorf O."/>
            <person name="Vincon V."/>
            <person name="Fuchs U."/>
            <person name="Sandrock B."/>
            <person name="Meng S."/>
            <person name="Ho E.C.H."/>
            <person name="Cahill M.J."/>
            <person name="Boyce K.J."/>
            <person name="Klose J."/>
            <person name="Klosterman S.J."/>
            <person name="Deelstra H.J."/>
            <person name="Ortiz-Castellanos L."/>
            <person name="Li W."/>
            <person name="Sanchez-Alonso P."/>
            <person name="Schreier P.H."/>
            <person name="Haeuser-Hahn I."/>
            <person name="Vaupel M."/>
            <person name="Koopmann E."/>
            <person name="Friedrich G."/>
            <person name="Voss H."/>
            <person name="Schlueter T."/>
            <person name="Margolis J."/>
            <person name="Platt D."/>
            <person name="Swimmer C."/>
            <person name="Gnirke A."/>
            <person name="Chen F."/>
            <person name="Vysotskaia V."/>
            <person name="Mannhaupt G."/>
            <person name="Gueldener U."/>
            <person name="Muensterkoetter M."/>
            <person name="Haase D."/>
            <person name="Oesterheld M."/>
            <person name="Mewes H.-W."/>
            <person name="Mauceli E.W."/>
            <person name="DeCaprio D."/>
            <person name="Wade C.M."/>
            <person name="Butler J."/>
            <person name="Young S.K."/>
            <person name="Jaffe D.B."/>
            <person name="Calvo S.E."/>
            <person name="Nusbaum C."/>
            <person name="Galagan J.E."/>
            <person name="Birren B.W."/>
        </authorList>
    </citation>
    <scope>NUCLEOTIDE SEQUENCE [LARGE SCALE GENOMIC DNA]</scope>
    <source>
        <strain>DSM 14603 / FGSC 9021 / UM521</strain>
    </source>
</reference>
<reference key="2">
    <citation type="submission" date="2014-09" db="EMBL/GenBank/DDBJ databases">
        <authorList>
            <person name="Gueldener U."/>
            <person name="Muensterkoetter M."/>
            <person name="Walter M.C."/>
            <person name="Mannhaupt G."/>
            <person name="Kahmann R."/>
        </authorList>
    </citation>
    <scope>GENOME REANNOTATION</scope>
    <source>
        <strain>DSM 14603 / FGSC 9021 / UM521</strain>
    </source>
</reference>
<reference key="3">
    <citation type="journal article" date="2005" name="Appl. Environ. Microbiol.">
        <title>Genetic analysis of biosurfactant production in Ustilago maydis.</title>
        <authorList>
            <person name="Hewald S."/>
            <person name="Josephs K."/>
            <person name="Boelker M."/>
        </authorList>
    </citation>
    <scope>FUNCTION</scope>
</reference>
<reference key="4">
    <citation type="journal article" date="2007" name="Mol. Microbiol.">
        <title>A biosynthetic gene cluster for a secreted cellobiose lipid with antifungal activity from Ustilago maydis.</title>
        <authorList>
            <person name="Teichmann B."/>
            <person name="Linne U."/>
            <person name="Hewald S."/>
            <person name="Marahiel M.A."/>
            <person name="Boelker M."/>
        </authorList>
    </citation>
    <scope>FUNCTION</scope>
    <scope>INDUCTION</scope>
    <scope>PATHWAY</scope>
</reference>
<reference key="5">
    <citation type="journal article" date="2010" name="Appl. Environ. Microbiol.">
        <title>Activation of the ustilagic acid biosynthesis gene cluster in Ustilago maydis by the C2H2 zinc finger transcription factor Rua1.</title>
        <authorList>
            <person name="Teichmann B."/>
            <person name="Liu L."/>
            <person name="Schink K.O."/>
            <person name="Boelker M."/>
        </authorList>
    </citation>
    <scope>INDUCTION</scope>
</reference>
<comment type="function">
    <text evidence="7 8 12">Fatty acid synthase; part of the gene cluster that mediates the biosynthesis of the glycolipid biosurfactant ustilagic acid (UA) (PubMed:15932999, PubMed:17850255). UA is a secreted cellobiose glycolipid that is toxic for many microorganisms and confers biocontrol activity to U.maydis (PubMed:15932999, PubMed:17850255). UA consists of 15,16-dihydroxypalmitic or 2,15,16-trihydroxypalmitic acid, which is O-glycosidically linked to cellobiose at its terminal hydroxyl group (PubMed:17850255). In addition, the cellobiose moiety is acetylated and acylated with a short-chain hydroxy fatty acid (PubMed:17850255). UA biosynthesis starts with omega-hydroxylation of palmitic acid catalyzed by the cytochrome P450 monooxygenase cyp1 (PubMed:17850255). Terminal hydroxylation of palmitic acid precedes subterminal hydroxylation catalyzed by the cytochrome P450 monooxygenase cyp2 (PubMed:17850255). Sequential glucosylation of the hydroxy fatty acid is probably catalyzed by the glycosyltransferase ugt1 (Probable). The cellobiose lipid is further decorated by acetylation of the proximal glucose residue and by acylation with a short-chain beta-hydroxy fatty acid at the distal glucose residue (Probable). The acyltransferase uat1 may be a good candidate for catalyzing either acetylation or acylation of the cellobiose lipid (Probable). The fatty acid synthase fas2 may be involved in synthesis of the carbon backbone of the short-chain beta-hydroxy fatty acid esterified to the cellobiose disaccharide (Probable). The secreted UA consists of a mixture of both alpha-hydroxylated and non-hydroxylated glycolipids; therefore, alpha-hydroxylation of the long-chain fatty, catalyzed by the fatty acid hydroxylase ahd1, occurs late in UA biosynthesis and may be the last step before secretion (PubMed:17850255).</text>
</comment>
<comment type="pathway">
    <text evidence="12">Secondary metabolite biosynthesis.</text>
</comment>
<comment type="induction">
    <text evidence="8 9">Expression is strongly induced under conditions of nitrogen starvation (PubMed:17850255). Expression is positively regulated by the cluster-specific transcription factor rua1 that recognizes and binds to the specific 5'-T/G-G/T-C-G-C-A-T-A/T-C/T-C/T-G/A-3' upstream activating sequence found in all promoters of the UA biosynthesis genes (PubMed:20173069).</text>
</comment>
<comment type="similarity">
    <text evidence="11">In the N-terminal section; belongs to the fungal fatty acid synthetase subunit beta family.</text>
</comment>
<comment type="similarity">
    <text evidence="11">In the C-terminal section; belongs to the thiolase-like superfamily. Fungal fatty acid synthetase subunit alpha family.</text>
</comment>
<evidence type="ECO:0000250" key="1">
    <source>
        <dbReference type="UniProtKB" id="Q8TGA1"/>
    </source>
</evidence>
<evidence type="ECO:0000250" key="2">
    <source>
        <dbReference type="UniProtKB" id="Q8TGA2"/>
    </source>
</evidence>
<evidence type="ECO:0000255" key="3"/>
<evidence type="ECO:0000255" key="4">
    <source>
        <dbReference type="PROSITE-ProRule" id="PRU00258"/>
    </source>
</evidence>
<evidence type="ECO:0000255" key="5">
    <source>
        <dbReference type="PROSITE-ProRule" id="PRU01348"/>
    </source>
</evidence>
<evidence type="ECO:0000256" key="6">
    <source>
        <dbReference type="SAM" id="MobiDB-lite"/>
    </source>
</evidence>
<evidence type="ECO:0000269" key="7">
    <source>
    </source>
</evidence>
<evidence type="ECO:0000269" key="8">
    <source>
    </source>
</evidence>
<evidence type="ECO:0000269" key="9">
    <source>
    </source>
</evidence>
<evidence type="ECO:0000303" key="10">
    <source>
    </source>
</evidence>
<evidence type="ECO:0000305" key="11"/>
<evidence type="ECO:0000305" key="12">
    <source>
    </source>
</evidence>
<name>FAS2_MYCMD</name>
<sequence>MDASRLSRSSSTSFTSVLSPFEPASVAVSAHGSPPSSASPGPDDKAFSVDGTQTPPHQLGVVLITSPFNSEVTVSLSVPIRDFLDRHNLVQVRDEFVNHLRSLLASSPGQEPAIDSVALLVHLLLYLAENLSSAEHRPRHARLSLLEAAWASFHSENLDSVDVHTFARSLSPEKASLVLRAHFEAYAALQQSGISVAIRVPALLQSVQKRQAGLYALFGGQGNNHGYFSELQTLFDTYRPLVEPIVAAATARFSHLLSRIDAARSGPYAFHSQGLDVLAWLQRRTDRPTEAYLASVPISGPLLSLTQLIQFYVAAKSSGMTVPQFRSHFEAVSGHSQGIVSATAMAMAIDDEHYIECVAMAAEFLFQIGSVSQLCYGDRTVSDETSMESVEAGFGPPSSMLVISAPSRAFIEVRVALFNTIVPEHRRIHAALINAPTTAVLAGHASDLVSFARDVSAISAPAKLDQARIPFSKRKPSLRLKFLPISLPYHSPLLADVTLSQVLAPIDAQKWQAHPLALPVHSTTDGANMQQLPSSSILDSLRVQMCTAPVDWIQAVQPSATITHFVDFGTGGASGIGNITARNLSGRGFKVLTVSGTHKESAEFYRLDPTPNAQPWGSKFQPRLLRTPQGKVILDTPMSRLLGKPPIMVAGMTPTTVQASLNAATIQAGYHIELAGGGLHDESKLRSRVQEILAKAPAASGLTLNSLYINPRQWSFQLPAWLQLSREGAPIDGLCVAAGIPSPDKAQELLTSLKQAGLRHVSFKPGSLDGIKQVCKIAQQNPGFPILLQWTGGRAGGHHSAEDFHDPIIHSYEIIRSCPNLVLVAGSGFTSADSFWPYLSGQWSVKRGLPPMPFDGVLFGSWAMTAKEAATSLPVKQLIASTQGCSDKDWQKTYDAPIGGIMTVLSEMGELVHQVANRATLLWSELDRDLFKLSKDKQLVYLAKNKERLVQRLNDDFQRVWFARDGQGKILYDVQDMTYADVADRMLSLMFIAAQARWIDLGYRNLLGDWCRRIEERFSKASKTYQLQSYAQFDRSPELELHRLLDHYPDCKTTLLTSEDVEYFHTMCWRRGQKPPPFITRLGEDFGHQFKKDSLWQSEDLDAVVDADPQRVCILHGPVAASDTAPVDQPIAEMLGSVEKGLVQHVLDHFYKGDLNNVPVAEYLDATATGSPAVRTSPIRTVCSRIKIDSGEHVAVFSVNSSAVKNPVAFLDSVVGEQPSWIRALVHSSRVSLGRQLRSNPLQRLLALREGQLFQIHTSVDGHNVKRLQVYGCHRSYGEQSNDFLAVDIVRRSDTKTSSGADIDVFIYEQRGSEAIPLLLQFEYTPSTSCALIREVEHGRNDRIRRFYWKMWFGEDMPADAQLDRVSSFTTEPRPVSSAQIPDGGAIAVDPTISAGWEAIMKTVVSSCDADLLSLVHLGHEFQTIGGALPVASGDICSVRSYASSITNSETGKILTVKATISRVEAAGSDAVPVVQVTSRFFYKGKYADHHRCFTETDFAFLLVLQDEAAVQVFKSKDWLELDQGVHEVKVGTELILRGTTVVPRYKNAKEMLDLRVQGAVFVRQGVEENQIGLIEFDADAPLSSDPIVAYLERHGTRLQNANEYSTVPISNAYKLAEGVLTTPKTNEPYSRASLDFNPIHINPYFANLAELPATIGHGMSTFAECQKWMDEAMKSTEPHNKTTVPSCTAFKADFTAMVVPGDQLSVQLRHKAMSDGQKVVQIDASNQRGELVLQGTARYQQPRSVYVFTGQGSQAKVMGMELYRQSATARAIWDEAEQHLAQSLGLSILEIVRENPKTKTVYFGGAQGQSIRRNYMALQHETIDEQGRSIRTPIFPSIHANSRSYTFESPKGLLFATQFTQIALVLFELAYFRHLQKEGIIVEDAVFAGHSLGEYAALASVAGMMRLRDLVDVVFYRGLTMQSAVPRINGRSDYGMVAVAPIKAFPKINDVDAALAQVVDRVSQASGQLLQTVNYNVRRQQSVVAGHEVALAALSRVLDKCGSKALSVANEAELVAEVTSAVEAAQSTAKTSGIELKRGIATIPLAGIDVPFHSKFLSNGIDPFRRFLDSRLDIETVRPEALVGRYIPNLVARIFTLERAYIEHVSEVTRSEVLANILANWDEALLDRRRLTRTLVIELLAYQFASPVLWSQTQTLLFQDASFERLIEFGPTPTLVGMASKTLAADFSEKDRKLGLKRTLLCVGKNDADILYSFEAEEEVNPTDSPKATPEPAVSKAALAAAATPAVAAATTAVAQVAAPALDDERLDPLLTVRSILAQKQKVKIADIPPSKSIKQLTGGRSTLQNELVGDLGAEFVELPERAEELTLEELAAALRPGYSGELGKYTNGLIARLSASKLPGSFGLTALKAHLTARYGFQSGRISAILLYTLTEEPAKRLTGDAEAISWIDGVAAVYAKDTSITLPAPGGAAGGAGATAGATALVSSKELVALQSKMQALSEKQIQVLTEHLGLDADASLSQLAKLSTESASLHKALDSVSAEHGDAYIKGIQGIFSAAKARTFKSFWNWSRQNLEELFADILQDRVSDDSTLLARIIQVWNQLDDVGILEQQLDQLQRSGVAGSDRVTSLFDPLLRQAKSGALKTAPRFIDVSVPLRPSTRLDSRGNIVYQQVPRDGMETILDYVTSMTSDKESKASAGQASSKSLIGRLEDLAQILSRLDEDQTSDVSIGSRPALWACKKVNSTWSRDDDLTEIYFRGLAKLAERGSSYAGLDVLLTGVGQGSIAFEVMRRFLRGGARVIVTTSTFSPKKLRMYGDTYRHDGARGAQLIVLPFNQGSFKDTQALVDHVYTSMGIDIDVLVPFAAISENGRNIDGIDDKSELAHRIMLTNVIRLMGCIKSAKAQRGILHRPTQVILPLSFNHGVLGGDGLYGPSKIGLETLLNTFESEDWSRYLSVAGARIGMCRGTDLMASSDIVAESLERHFGFRTFSTGEMAFNLLGLVEPEFASVNQTQPILLDLTGRASSLASPGKAMRDAHQEWQRKSDIKKALLSENRHDFKTTSSTRVTEDHYRRVEIEPRSLHHFAYPELNSQQVCDQIAKGTCHLDLDQVIVISGFAEVGPWGSSRTRWEREVSETWSLEGLVEMAWLTGHIKHFNGRLADGRSYIGWVDTKTGEPVADAQMRARYARQVEQHAGIRLVEPELMHGFDPERKVIQQEIELTHDLGPLEISAGEAERFRLAHGDKAIVWQDEETKSWYLRLKKGASVFLPKASRFDRHVAAQMPTGWDPARYGIPSDIVSQTDETALYALVCIAEALVQSGIDDPYELYKHVHVSEVGTSLGSAMGGLRSLAKMFKDRRQDVEVQKDILQETFINTVAGWTNLLLLSSCGPIKPTVGACATALQSLDVAAETIRCGKAKIMIAGGYESISEESMTEFANMKATASSDEAFAAGLAPEELSKPMTSGRSGFVEAQGCGVQIVMSAATAIRIGAPINGIVAYTQTATDRQGRSIPAPGKGVLAATVPLQRAMSGWGLDGNDVGVISMHGTSTKANDKNESNVYHTMLGKLGRAEGRAVPAMAQKWLCGHGKGGAAAWAINGLMQSINDGIVAGNRNADDISEELRAYNRIVYPSRSIRYSRERLHAGLVTSFGFGQVGGIAMILHASHLFGRLDREAFELYKARRNKRQQITYRRMHSLFIKGDLVRIKEDAPYSPEDETAVLLDIDARAELSSEGSYRIVPSIYA</sequence>
<organism>
    <name type="scientific">Mycosarcoma maydis</name>
    <name type="common">Corn smut fungus</name>
    <name type="synonym">Ustilago maydis</name>
    <dbReference type="NCBI Taxonomy" id="5270"/>
    <lineage>
        <taxon>Eukaryota</taxon>
        <taxon>Fungi</taxon>
        <taxon>Dikarya</taxon>
        <taxon>Basidiomycota</taxon>
        <taxon>Ustilaginomycotina</taxon>
        <taxon>Ustilaginomycetes</taxon>
        <taxon>Ustilaginales</taxon>
        <taxon>Ustilaginaceae</taxon>
        <taxon>Mycosarcoma</taxon>
    </lineage>
</organism>
<keyword id="KW-0378">Hydrolase</keyword>
<keyword id="KW-0521">NADP</keyword>
<keyword id="KW-0560">Oxidoreductase</keyword>
<keyword id="KW-0596">Phosphopantetheine</keyword>
<keyword id="KW-0597">Phosphoprotein</keyword>
<keyword id="KW-1185">Reference proteome</keyword>
<keyword id="KW-0808">Transferase</keyword>
<gene>
    <name evidence="10" type="primary">fas2</name>
    <name type="ORF">UMAG_06460</name>
</gene>
<dbReference type="EC" id="2.3.1.-" evidence="12"/>
<dbReference type="EMBL" id="CM003162">
    <property type="protein sequence ID" value="KIS65756.1"/>
    <property type="molecule type" value="Genomic_DNA"/>
</dbReference>
<dbReference type="RefSeq" id="XP_011392728.1">
    <property type="nucleotide sequence ID" value="XM_011394426.1"/>
</dbReference>
<dbReference type="SMR" id="A0A0D1DNX1"/>
<dbReference type="FunCoup" id="A0A0D1DNX1">
    <property type="interactions" value="21"/>
</dbReference>
<dbReference type="STRING" id="237631.A0A0D1DNX1"/>
<dbReference type="EnsemblFungi" id="KIS65756">
    <property type="protein sequence ID" value="KIS65756"/>
    <property type="gene ID" value="UMAG_06460"/>
</dbReference>
<dbReference type="GeneID" id="23566042"/>
<dbReference type="KEGG" id="uma:UMAG_06460"/>
<dbReference type="VEuPathDB" id="FungiDB:UMAG_06460"/>
<dbReference type="eggNOG" id="ENOG502QQJX">
    <property type="taxonomic scope" value="Eukaryota"/>
</dbReference>
<dbReference type="InParanoid" id="A0A0D1DNX1"/>
<dbReference type="OMA" id="APLVHGM"/>
<dbReference type="OrthoDB" id="4251012at2759"/>
<dbReference type="Proteomes" id="UP000000561">
    <property type="component" value="Chromosome 23"/>
</dbReference>
<dbReference type="GO" id="GO:0005835">
    <property type="term" value="C:fatty acid synthase complex"/>
    <property type="evidence" value="ECO:0000318"/>
    <property type="project" value="GO_Central"/>
</dbReference>
<dbReference type="GO" id="GO:0019171">
    <property type="term" value="F:(3R)-hydroxyacyl-[acyl-carrier-protein] dehydratase activity"/>
    <property type="evidence" value="ECO:0007669"/>
    <property type="project" value="InterPro"/>
</dbReference>
<dbReference type="GO" id="GO:0004315">
    <property type="term" value="F:3-oxoacyl-[acyl-carrier-protein] synthase activity"/>
    <property type="evidence" value="ECO:0007669"/>
    <property type="project" value="InterPro"/>
</dbReference>
<dbReference type="GO" id="GO:0004318">
    <property type="term" value="F:enoyl-[acyl-carrier-protein] reductase (NADH) activity"/>
    <property type="evidence" value="ECO:0007669"/>
    <property type="project" value="InterPro"/>
</dbReference>
<dbReference type="GO" id="GO:0004312">
    <property type="term" value="F:fatty acid synthase activity"/>
    <property type="evidence" value="ECO:0007669"/>
    <property type="project" value="InterPro"/>
</dbReference>
<dbReference type="GO" id="GO:0008897">
    <property type="term" value="F:holo-[acyl-carrier-protein] synthase activity"/>
    <property type="evidence" value="ECO:0007669"/>
    <property type="project" value="InterPro"/>
</dbReference>
<dbReference type="GO" id="GO:0016787">
    <property type="term" value="F:hydrolase activity"/>
    <property type="evidence" value="ECO:0007669"/>
    <property type="project" value="UniProtKB-KW"/>
</dbReference>
<dbReference type="GO" id="GO:0042759">
    <property type="term" value="P:long-chain fatty acid biosynthetic process"/>
    <property type="evidence" value="ECO:0000318"/>
    <property type="project" value="GO_Central"/>
</dbReference>
<dbReference type="CDD" id="cd00828">
    <property type="entry name" value="elong_cond_enzymes"/>
    <property type="match status" value="1"/>
</dbReference>
<dbReference type="CDD" id="cd03447">
    <property type="entry name" value="FAS_MaoC"/>
    <property type="match status" value="1"/>
</dbReference>
<dbReference type="CDD" id="cd08950">
    <property type="entry name" value="KR_fFAS_SDR_c_like"/>
    <property type="match status" value="1"/>
</dbReference>
<dbReference type="FunFam" id="1.20.930.70:FF:000001">
    <property type="entry name" value="Fatty acid synthase beta subunit dehydratase"/>
    <property type="match status" value="1"/>
</dbReference>
<dbReference type="FunFam" id="3.20.20.70:FF:000078">
    <property type="entry name" value="Fatty acid synthase beta subunit dehydratase"/>
    <property type="match status" value="1"/>
</dbReference>
<dbReference type="FunFam" id="3.40.366.10:FF:000006">
    <property type="entry name" value="Fatty acid synthase beta subunit dehydratase"/>
    <property type="match status" value="1"/>
</dbReference>
<dbReference type="FunFam" id="3.30.70.2490:FF:000001">
    <property type="entry name" value="Fatty acid synthase subunit alpha"/>
    <property type="match status" value="1"/>
</dbReference>
<dbReference type="FunFam" id="3.40.50.720:FF:000168">
    <property type="entry name" value="Fatty acid synthase subunit alpha"/>
    <property type="match status" value="1"/>
</dbReference>
<dbReference type="FunFam" id="3.90.25.70:FF:000001">
    <property type="entry name" value="Fatty acid synthase subunit alpha"/>
    <property type="match status" value="1"/>
</dbReference>
<dbReference type="Gene3D" id="1.20.1050.120">
    <property type="match status" value="1"/>
</dbReference>
<dbReference type="Gene3D" id="1.20.930.70">
    <property type="match status" value="1"/>
</dbReference>
<dbReference type="Gene3D" id="2.40.128.700">
    <property type="match status" value="1"/>
</dbReference>
<dbReference type="Gene3D" id="3.30.1120.100">
    <property type="match status" value="1"/>
</dbReference>
<dbReference type="Gene3D" id="3.30.70.2490">
    <property type="match status" value="1"/>
</dbReference>
<dbReference type="Gene3D" id="3.40.47.10">
    <property type="match status" value="1"/>
</dbReference>
<dbReference type="Gene3D" id="3.90.25.70">
    <property type="match status" value="1"/>
</dbReference>
<dbReference type="Gene3D" id="6.10.140.1400">
    <property type="match status" value="1"/>
</dbReference>
<dbReference type="Gene3D" id="6.10.250.1930">
    <property type="match status" value="1"/>
</dbReference>
<dbReference type="Gene3D" id="6.10.60.10">
    <property type="match status" value="1"/>
</dbReference>
<dbReference type="Gene3D" id="6.20.240.10">
    <property type="match status" value="1"/>
</dbReference>
<dbReference type="Gene3D" id="3.20.20.70">
    <property type="entry name" value="Aldolase class I"/>
    <property type="match status" value="1"/>
</dbReference>
<dbReference type="Gene3D" id="3.10.129.10">
    <property type="entry name" value="Hotdog Thioesterase"/>
    <property type="match status" value="1"/>
</dbReference>
<dbReference type="Gene3D" id="3.40.366.10">
    <property type="entry name" value="Malonyl-Coenzyme A Acyl Carrier Protein, domain 2"/>
    <property type="match status" value="3"/>
</dbReference>
<dbReference type="Gene3D" id="3.40.50.720">
    <property type="entry name" value="NAD(P)-binding Rossmann-like Domain"/>
    <property type="match status" value="1"/>
</dbReference>
<dbReference type="InterPro" id="IPR001227">
    <property type="entry name" value="Ac_transferase_dom_sf"/>
</dbReference>
<dbReference type="InterPro" id="IPR014043">
    <property type="entry name" value="Acyl_transferase_dom"/>
</dbReference>
<dbReference type="InterPro" id="IPR016035">
    <property type="entry name" value="Acyl_Trfase/lysoPLipase"/>
</dbReference>
<dbReference type="InterPro" id="IPR013785">
    <property type="entry name" value="Aldolase_TIM"/>
</dbReference>
<dbReference type="InterPro" id="IPR013565">
    <property type="entry name" value="Fas1/AflB-like_central"/>
</dbReference>
<dbReference type="InterPro" id="IPR040899">
    <property type="entry name" value="Fas_alpha_ACP"/>
</dbReference>
<dbReference type="InterPro" id="IPR047224">
    <property type="entry name" value="FAS_alpha_su_C"/>
</dbReference>
<dbReference type="InterPro" id="IPR040883">
    <property type="entry name" value="FAS_meander"/>
</dbReference>
<dbReference type="InterPro" id="IPR041550">
    <property type="entry name" value="FASI_helical"/>
</dbReference>
<dbReference type="InterPro" id="IPR003965">
    <property type="entry name" value="Fatty_acid_synthase"/>
</dbReference>
<dbReference type="InterPro" id="IPR050830">
    <property type="entry name" value="Fungal_FAS"/>
</dbReference>
<dbReference type="InterPro" id="IPR029069">
    <property type="entry name" value="HotDog_dom_sf"/>
</dbReference>
<dbReference type="InterPro" id="IPR018201">
    <property type="entry name" value="Ketoacyl_synth_AS"/>
</dbReference>
<dbReference type="InterPro" id="IPR014031">
    <property type="entry name" value="Ketoacyl_synth_C"/>
</dbReference>
<dbReference type="InterPro" id="IPR014030">
    <property type="entry name" value="Ketoacyl_synth_N"/>
</dbReference>
<dbReference type="InterPro" id="IPR002539">
    <property type="entry name" value="MaoC-like_dom"/>
</dbReference>
<dbReference type="InterPro" id="IPR036291">
    <property type="entry name" value="NAD(P)-bd_dom_sf"/>
</dbReference>
<dbReference type="InterPro" id="IPR020841">
    <property type="entry name" value="PKS_Beta-ketoAc_synthase_dom"/>
</dbReference>
<dbReference type="InterPro" id="IPR032088">
    <property type="entry name" value="SAT"/>
</dbReference>
<dbReference type="InterPro" id="IPR016039">
    <property type="entry name" value="Thiolase-like"/>
</dbReference>
<dbReference type="PANTHER" id="PTHR10982:SF21">
    <property type="entry name" value="FATTY ACID SYNTHASE SUBUNIT BETA"/>
    <property type="match status" value="1"/>
</dbReference>
<dbReference type="PANTHER" id="PTHR10982">
    <property type="entry name" value="MALONYL COA-ACYL CARRIER PROTEIN TRANSACYLASE"/>
    <property type="match status" value="1"/>
</dbReference>
<dbReference type="Pfam" id="PF00698">
    <property type="entry name" value="Acyl_transf_1"/>
    <property type="match status" value="1"/>
</dbReference>
<dbReference type="Pfam" id="PF08354">
    <property type="entry name" value="Fas1-AflB-like_hel"/>
    <property type="match status" value="1"/>
</dbReference>
<dbReference type="Pfam" id="PF22235">
    <property type="entry name" value="FAS1_thioest_ins"/>
    <property type="match status" value="1"/>
</dbReference>
<dbReference type="Pfam" id="PF18325">
    <property type="entry name" value="Fas_alpha_ACP"/>
    <property type="match status" value="1"/>
</dbReference>
<dbReference type="Pfam" id="PF18314">
    <property type="entry name" value="FAS_I_H"/>
    <property type="match status" value="1"/>
</dbReference>
<dbReference type="Pfam" id="PF17951">
    <property type="entry name" value="FAS_meander"/>
    <property type="match status" value="1"/>
</dbReference>
<dbReference type="Pfam" id="PF00109">
    <property type="entry name" value="ketoacyl-synt"/>
    <property type="match status" value="1"/>
</dbReference>
<dbReference type="Pfam" id="PF02801">
    <property type="entry name" value="Ketoacyl-synt_C"/>
    <property type="match status" value="1"/>
</dbReference>
<dbReference type="Pfam" id="PF01575">
    <property type="entry name" value="MaoC_dehydratas"/>
    <property type="match status" value="1"/>
</dbReference>
<dbReference type="Pfam" id="PF16073">
    <property type="entry name" value="SAT"/>
    <property type="match status" value="1"/>
</dbReference>
<dbReference type="PRINTS" id="PR01483">
    <property type="entry name" value="FASYNTHASE"/>
</dbReference>
<dbReference type="SMART" id="SM00827">
    <property type="entry name" value="PKS_AT"/>
    <property type="match status" value="1"/>
</dbReference>
<dbReference type="SUPFAM" id="SSF52151">
    <property type="entry name" value="FabD/lysophospholipase-like"/>
    <property type="match status" value="2"/>
</dbReference>
<dbReference type="SUPFAM" id="SSF51735">
    <property type="entry name" value="NAD(P)-binding Rossmann-fold domains"/>
    <property type="match status" value="1"/>
</dbReference>
<dbReference type="SUPFAM" id="SSF54637">
    <property type="entry name" value="Thioesterase/thiol ester dehydrase-isomerase"/>
    <property type="match status" value="1"/>
</dbReference>
<dbReference type="SUPFAM" id="SSF53901">
    <property type="entry name" value="Thiolase-like"/>
    <property type="match status" value="2"/>
</dbReference>
<dbReference type="PROSITE" id="PS00606">
    <property type="entry name" value="KS3_1"/>
    <property type="match status" value="1"/>
</dbReference>
<dbReference type="PROSITE" id="PS52004">
    <property type="entry name" value="KS3_2"/>
    <property type="match status" value="1"/>
</dbReference>
<feature type="chain" id="PRO_0000452760" description="Fatty acid synthase 2">
    <location>
        <begin position="1"/>
        <end position="3704"/>
    </location>
</feature>
<feature type="domain" description="MaoC-like" evidence="3">
    <location>
        <begin position="1624"/>
        <end position="1730"/>
    </location>
</feature>
<feature type="domain" description="Carrier" evidence="4">
    <location>
        <begin position="2265"/>
        <end position="2343"/>
    </location>
</feature>
<feature type="domain" description="Ketosynthase family 3 (KS3)" evidence="5">
    <location>
        <begin position="3176"/>
        <end position="3623"/>
    </location>
</feature>
<feature type="region of interest" description="Disordered" evidence="6">
    <location>
        <begin position="27"/>
        <end position="52"/>
    </location>
</feature>
<feature type="region of interest" description="Acetyltransferase (AT) domain" evidence="1">
    <location>
        <begin position="216"/>
        <end position="475"/>
    </location>
</feature>
<feature type="region of interest" description="Enoyl reductase (ER) domain" evidence="1">
    <location>
        <begin position="639"/>
        <end position="887"/>
    </location>
</feature>
<feature type="region of interest" description="Dehydratase (DH) domain" evidence="1">
    <location>
        <begin position="1216"/>
        <end position="1709"/>
    </location>
</feature>
<feature type="region of interest" description="Malonyl/palmitoyl transferase (MT/PT) domain" evidence="1">
    <location>
        <begin position="1747"/>
        <end position="2112"/>
    </location>
</feature>
<feature type="region of interest" description="Ketoreductase (KR) domain" evidence="2 3">
    <location>
        <begin position="2733"/>
        <end position="2969"/>
    </location>
</feature>
<feature type="compositionally biased region" description="Low complexity" evidence="6">
    <location>
        <begin position="27"/>
        <end position="41"/>
    </location>
</feature>
<feature type="active site" description="For beta-ketoacyl synthase activity" evidence="5">
    <location>
        <position position="3359"/>
    </location>
</feature>
<feature type="active site" description="For beta-ketoacyl synthase activity" evidence="5">
    <location>
        <position position="3506"/>
    </location>
</feature>
<feature type="active site" description="For beta-ketoacyl synthase activity" evidence="5">
    <location>
        <position position="3547"/>
    </location>
</feature>
<feature type="modified residue" description="O-(pantetheine 4'-phosphoryl)serine" evidence="4">
    <location>
        <position position="2303"/>
    </location>
</feature>